<organism>
    <name type="scientific">Eimeria tenella</name>
    <name type="common">Coccidian parasite</name>
    <dbReference type="NCBI Taxonomy" id="5802"/>
    <lineage>
        <taxon>Eukaryota</taxon>
        <taxon>Sar</taxon>
        <taxon>Alveolata</taxon>
        <taxon>Apicomplexa</taxon>
        <taxon>Conoidasida</taxon>
        <taxon>Coccidia</taxon>
        <taxon>Eucoccidiorida</taxon>
        <taxon>Eimeriorina</taxon>
        <taxon>Eimeriidae</taxon>
        <taxon>Eimeria</taxon>
    </lineage>
</organism>
<accession>P15714</accession>
<dbReference type="EMBL" id="M30933">
    <property type="protein sequence ID" value="AAA29079.1"/>
    <property type="molecule type" value="mRNA"/>
</dbReference>
<dbReference type="PIR" id="A60637">
    <property type="entry name" value="A60637"/>
</dbReference>
<dbReference type="VEuPathDB" id="ToxoDB:ETH2_0106900"/>
<dbReference type="VEuPathDB" id="ToxoDB:ETH_00042955"/>
<dbReference type="GO" id="GO:0030435">
    <property type="term" value="P:sporulation resulting in formation of a cellular spore"/>
    <property type="evidence" value="ECO:0007669"/>
    <property type="project" value="UniProtKB-KW"/>
</dbReference>
<reference key="1">
    <citation type="journal article" date="1990" name="Mol. Biochem. Parasitol.">
        <title>Identification and characterization of a target antigen of a monoclonal antibody directed against Eimeria tenella merozoites.</title>
        <authorList>
            <person name="Ko C."/>
            <person name="Smith C.K. II"/>
            <person name="McDonell M."/>
        </authorList>
    </citation>
    <scope>NUCLEOTIDE SEQUENCE [MRNA]</scope>
    <source>
        <tissue>Sporozoite</tissue>
    </source>
</reference>
<comment type="function">
    <text>Unknown. The Gln-rich tandem repeats may be important for an unknown aspect of the parasitic life cycle. May be an important immunogen.</text>
</comment>
<comment type="subunit">
    <text>May be covalently linked by disulfide bonds to other polypeptides to form the 80 kDa antigen.</text>
</comment>
<comment type="developmental stage">
    <text>Present in all stages throughout the sporulation of the oocysts and in the sporozoites following excystation.</text>
</comment>
<keyword id="KW-1015">Disulfide bond</keyword>
<keyword id="KW-0677">Repeat</keyword>
<keyword id="KW-0748">Sporozoite</keyword>
<keyword id="KW-0749">Sporulation</keyword>
<sequence>LRLLLKLLLLLLGQQKHWPERQQQQQPQPWLDRQQQQQQHNQQLQKQQWPEGQRQQLWPEQQQQQWPEQHQQAQQQQQWPQQQPQMQQEQWPQQQPQVQQQQQWPQQQHRRQHGQQQQCMNSQQQLQQCGQQQQQQLQQQWSEQQQQQQQQQWPEQPEQQQQQQWPEQQQQQWSDQNQQQQAQQWQAQQQQQWPQQQQQPQQQQQQQQQQDLGPDGVGIVVPYLGSSPADFEVQNLGVSVLPRIKLPLPKFDNDD</sequence>
<evidence type="ECO:0000256" key="1">
    <source>
        <dbReference type="SAM" id="MobiDB-lite"/>
    </source>
</evidence>
<feature type="chain" id="PRO_0000084461" description="Antigen LPMC-61">
    <location>
        <begin position="1" status="less than"/>
        <end position="255" status="greater than"/>
    </location>
</feature>
<feature type="repeat" description="1">
    <location>
        <begin position="18"/>
        <end position="48"/>
    </location>
</feature>
<feature type="repeat" description="2">
    <location>
        <begin position="49"/>
        <end position="57"/>
    </location>
</feature>
<feature type="repeat" description="3">
    <location>
        <begin position="58"/>
        <end position="65"/>
    </location>
</feature>
<feature type="repeat" description="4">
    <location>
        <begin position="66"/>
        <end position="78"/>
    </location>
</feature>
<feature type="repeat" description="5">
    <location>
        <begin position="79"/>
        <end position="90"/>
    </location>
</feature>
<feature type="repeat" description="6">
    <location>
        <begin position="91"/>
        <end position="103"/>
    </location>
</feature>
<feature type="repeat" description="7">
    <location>
        <begin position="104"/>
        <end position="140"/>
    </location>
</feature>
<feature type="repeat" description="8">
    <location>
        <begin position="141"/>
        <end position="152"/>
    </location>
</feature>
<feature type="repeat" description="9">
    <location>
        <begin position="153"/>
        <end position="164"/>
    </location>
</feature>
<feature type="repeat" description="10">
    <location>
        <begin position="165"/>
        <end position="172"/>
    </location>
</feature>
<feature type="repeat" description="11">
    <location>
        <begin position="173"/>
        <end position="192"/>
    </location>
</feature>
<feature type="repeat" description="12">
    <location>
        <begin position="193"/>
        <end position="210"/>
    </location>
</feature>
<feature type="region of interest" description="12 X approximate tandem repeats, Gln-rich">
    <location>
        <begin position="18"/>
        <end position="210"/>
    </location>
</feature>
<feature type="region of interest" description="Disordered" evidence="1">
    <location>
        <begin position="18"/>
        <end position="90"/>
    </location>
</feature>
<feature type="region of interest" description="Disordered" evidence="1">
    <location>
        <begin position="149"/>
        <end position="224"/>
    </location>
</feature>
<feature type="compositionally biased region" description="Low complexity" evidence="1">
    <location>
        <begin position="149"/>
        <end position="210"/>
    </location>
</feature>
<feature type="non-terminal residue">
    <location>
        <position position="1"/>
    </location>
</feature>
<feature type="non-terminal residue">
    <location>
        <position position="255"/>
    </location>
</feature>
<proteinExistence type="evidence at transcript level"/>
<protein>
    <recommendedName>
        <fullName>Antigen LPMC-61</fullName>
    </recommendedName>
</protein>
<name>LP61_EIMTE</name>